<organism>
    <name type="scientific">Rattus norvegicus</name>
    <name type="common">Rat</name>
    <dbReference type="NCBI Taxonomy" id="10116"/>
    <lineage>
        <taxon>Eukaryota</taxon>
        <taxon>Metazoa</taxon>
        <taxon>Chordata</taxon>
        <taxon>Craniata</taxon>
        <taxon>Vertebrata</taxon>
        <taxon>Euteleostomi</taxon>
        <taxon>Mammalia</taxon>
        <taxon>Eutheria</taxon>
        <taxon>Euarchontoglires</taxon>
        <taxon>Glires</taxon>
        <taxon>Rodentia</taxon>
        <taxon>Myomorpha</taxon>
        <taxon>Muroidea</taxon>
        <taxon>Muridae</taxon>
        <taxon>Murinae</taxon>
        <taxon>Rattus</taxon>
    </lineage>
</organism>
<keyword id="KW-0325">Glycoprotein</keyword>
<keyword id="KW-0328">Glycosyltransferase</keyword>
<keyword id="KW-0333">Golgi apparatus</keyword>
<keyword id="KW-0464">Manganese</keyword>
<keyword id="KW-0472">Membrane</keyword>
<keyword id="KW-0479">Metal-binding</keyword>
<keyword id="KW-1185">Reference proteome</keyword>
<keyword id="KW-0964">Secreted</keyword>
<keyword id="KW-0735">Signal-anchor</keyword>
<keyword id="KW-0808">Transferase</keyword>
<keyword id="KW-0812">Transmembrane</keyword>
<keyword id="KW-1133">Transmembrane helix</keyword>
<name>BGAT1_RAT</name>
<evidence type="ECO:0000250" key="1"/>
<evidence type="ECO:0000250" key="2">
    <source>
        <dbReference type="UniProtKB" id="P14769"/>
    </source>
</evidence>
<evidence type="ECO:0000250" key="3">
    <source>
        <dbReference type="UniProtKB" id="P16442"/>
    </source>
</evidence>
<evidence type="ECO:0000255" key="4"/>
<evidence type="ECO:0000269" key="5">
    <source>
    </source>
</evidence>
<evidence type="ECO:0000269" key="6">
    <source>
    </source>
</evidence>
<evidence type="ECO:0000269" key="7">
    <source>
    </source>
</evidence>
<evidence type="ECO:0000305" key="8"/>
<proteinExistence type="evidence at protein level"/>
<sequence length="348" mass="40375">MDLRGRPKCYSLHLGILPFIVLVLVFFGYGFLSHKIQEFRNPGGETCMATRQTDVQKVVSVPRMAYPQPNVLTPIRNDVLVFTPWLAPIIWEGTFNIDILNEQFKLQNTTIGLTVFAIKKYVVFLKLFLETAEQHFMVGHKVIYYVFTDRPSDVPQVPLGAGRKLVVLTVRNYTRWQDVSMHRMEMISHFSEQRFQHEVDYLVCGDVDMKFSDHVGVEILSALFGTLHPGFYRSRRESFTYERRPKSQAYIPRDEGDFYYAGGFFGGSVVEVHHLTKACHQAMVEDQANGIEAVWHDESHLNKYLLYHKPTKVLSPEYVWDQKLLGWPSIMKKLRYVAVPKNHQAIRN</sequence>
<dbReference type="EC" id="2.4.1.40" evidence="3"/>
<dbReference type="EC" id="2.4.1.37" evidence="3"/>
<dbReference type="EMBL" id="AF264018">
    <property type="protein sequence ID" value="AAF74758.2"/>
    <property type="molecule type" value="mRNA"/>
</dbReference>
<dbReference type="EMBL" id="AF296761">
    <property type="protein sequence ID" value="AAL98710.1"/>
    <property type="molecule type" value="Genomic_DNA"/>
</dbReference>
<dbReference type="EMBL" id="AF296762">
    <property type="protein sequence ID" value="AAL98711.1"/>
    <property type="molecule type" value="mRNA"/>
</dbReference>
<dbReference type="EMBL" id="AF469945">
    <property type="protein sequence ID" value="AAL82445.1"/>
    <property type="molecule type" value="mRNA"/>
</dbReference>
<dbReference type="EMBL" id="AF469946">
    <property type="protein sequence ID" value="AAL82446.1"/>
    <property type="molecule type" value="mRNA"/>
</dbReference>
<dbReference type="EMBL" id="AH011509">
    <property type="protein sequence ID" value="AAL82447.1"/>
    <property type="molecule type" value="Genomic_DNA"/>
</dbReference>
<dbReference type="EMBL" id="AB081649">
    <property type="protein sequence ID" value="BAC16245.1"/>
    <property type="molecule type" value="mRNA"/>
</dbReference>
<dbReference type="EMBL" id="AB081650">
    <property type="protein sequence ID" value="BAC16246.1"/>
    <property type="molecule type" value="mRNA"/>
</dbReference>
<dbReference type="EMBL" id="AB081651">
    <property type="protein sequence ID" value="BAC16247.1"/>
    <property type="molecule type" value="mRNA"/>
</dbReference>
<dbReference type="RefSeq" id="NP_075582.3">
    <property type="nucleotide sequence ID" value="NM_023094.3"/>
</dbReference>
<dbReference type="SMR" id="Q9ET32"/>
<dbReference type="FunCoup" id="Q9ET32">
    <property type="interactions" value="1"/>
</dbReference>
<dbReference type="STRING" id="10116.ENSRNOP00000006553"/>
<dbReference type="CAZy" id="GT6">
    <property type="family name" value="Glycosyltransferase Family 6"/>
</dbReference>
<dbReference type="GlyCosmos" id="Q9ET32">
    <property type="glycosylation" value="1 site, No reported glycans"/>
</dbReference>
<dbReference type="GlyGen" id="Q9ET32">
    <property type="glycosylation" value="1 site"/>
</dbReference>
<dbReference type="PaxDb" id="10116-ENSRNOP00000006553"/>
<dbReference type="Ensembl" id="ENSRNOT00000006553.8">
    <property type="protein sequence ID" value="ENSRNOP00000006553.7"/>
    <property type="gene ID" value="ENSRNOG00000039906.6"/>
</dbReference>
<dbReference type="Ensembl" id="ENSRNOT00000074271.4">
    <property type="protein sequence ID" value="ENSRNOP00000065701.3"/>
    <property type="gene ID" value="ENSRNOG00000039906.6"/>
</dbReference>
<dbReference type="GeneID" id="65270"/>
<dbReference type="KEGG" id="rno:65270"/>
<dbReference type="UCSC" id="RGD:628609">
    <property type="organism name" value="rat"/>
</dbReference>
<dbReference type="AGR" id="RGD:628609"/>
<dbReference type="CTD" id="65270"/>
<dbReference type="RGD" id="628609">
    <property type="gene designation" value="Abo"/>
</dbReference>
<dbReference type="eggNOG" id="ENOG502QQAJ">
    <property type="taxonomic scope" value="Eukaryota"/>
</dbReference>
<dbReference type="GeneTree" id="ENSGT00950000182858"/>
<dbReference type="HOGENOM" id="CLU_062445_0_1_1"/>
<dbReference type="InParanoid" id="Q9ET32"/>
<dbReference type="OrthoDB" id="37726at9989"/>
<dbReference type="PhylomeDB" id="Q9ET32"/>
<dbReference type="TreeFam" id="TF330991"/>
<dbReference type="BRENDA" id="2.4.1.40">
    <property type="organism ID" value="5301"/>
</dbReference>
<dbReference type="UniPathway" id="UPA00378"/>
<dbReference type="PRO" id="PR:Q9ET32"/>
<dbReference type="Proteomes" id="UP000002494">
    <property type="component" value="Chromosome 3"/>
</dbReference>
<dbReference type="GO" id="GO:0005576">
    <property type="term" value="C:extracellular region"/>
    <property type="evidence" value="ECO:0007669"/>
    <property type="project" value="UniProtKB-SubCell"/>
</dbReference>
<dbReference type="GO" id="GO:0005794">
    <property type="term" value="C:Golgi apparatus"/>
    <property type="evidence" value="ECO:0000318"/>
    <property type="project" value="GO_Central"/>
</dbReference>
<dbReference type="GO" id="GO:0032580">
    <property type="term" value="C:Golgi cisterna membrane"/>
    <property type="evidence" value="ECO:0007669"/>
    <property type="project" value="UniProtKB-SubCell"/>
</dbReference>
<dbReference type="GO" id="GO:0031982">
    <property type="term" value="C:vesicle"/>
    <property type="evidence" value="ECO:0000318"/>
    <property type="project" value="GO_Central"/>
</dbReference>
<dbReference type="GO" id="GO:0004381">
    <property type="term" value="F:fucosylgalactoside 3-alpha-galactosyltransferase activity"/>
    <property type="evidence" value="ECO:0007669"/>
    <property type="project" value="UniProtKB-EC"/>
</dbReference>
<dbReference type="GO" id="GO:0004380">
    <property type="term" value="F:glycoprotein-fucosylgalactoside alpha-N-acetylgalactosaminyltransferase activity"/>
    <property type="evidence" value="ECO:0000314"/>
    <property type="project" value="RGD"/>
</dbReference>
<dbReference type="GO" id="GO:0016757">
    <property type="term" value="F:glycosyltransferase activity"/>
    <property type="evidence" value="ECO:0000318"/>
    <property type="project" value="GO_Central"/>
</dbReference>
<dbReference type="GO" id="GO:0046872">
    <property type="term" value="F:metal ion binding"/>
    <property type="evidence" value="ECO:0007669"/>
    <property type="project" value="UniProtKB-KW"/>
</dbReference>
<dbReference type="GO" id="GO:0005975">
    <property type="term" value="P:carbohydrate metabolic process"/>
    <property type="evidence" value="ECO:0007669"/>
    <property type="project" value="InterPro"/>
</dbReference>
<dbReference type="GO" id="GO:0042742">
    <property type="term" value="P:defense response to bacterium"/>
    <property type="evidence" value="ECO:0000270"/>
    <property type="project" value="RGD"/>
</dbReference>
<dbReference type="GO" id="GO:0030259">
    <property type="term" value="P:lipid glycosylation"/>
    <property type="evidence" value="ECO:0000318"/>
    <property type="project" value="GO_Central"/>
</dbReference>
<dbReference type="GO" id="GO:0006486">
    <property type="term" value="P:protein glycosylation"/>
    <property type="evidence" value="ECO:0007669"/>
    <property type="project" value="UniProtKB-UniPathway"/>
</dbReference>
<dbReference type="CDD" id="cd02515">
    <property type="entry name" value="Glyco_transf_6"/>
    <property type="match status" value="1"/>
</dbReference>
<dbReference type="FunFam" id="3.90.550.10:FF:000022">
    <property type="entry name" value="Histo-blood group ABO system transferase"/>
    <property type="match status" value="1"/>
</dbReference>
<dbReference type="Gene3D" id="3.90.550.10">
    <property type="entry name" value="Spore Coat Polysaccharide Biosynthesis Protein SpsA, Chain A"/>
    <property type="match status" value="1"/>
</dbReference>
<dbReference type="InterPro" id="IPR005076">
    <property type="entry name" value="Glyco_trans_6"/>
</dbReference>
<dbReference type="InterPro" id="IPR029044">
    <property type="entry name" value="Nucleotide-diphossugar_trans"/>
</dbReference>
<dbReference type="PANTHER" id="PTHR10462">
    <property type="entry name" value="GLYCOSYLTRANSFERASE-RELATED"/>
    <property type="match status" value="1"/>
</dbReference>
<dbReference type="PANTHER" id="PTHR10462:SF55">
    <property type="entry name" value="HISTO-BLOOD GROUP ABO SYSTEM TRANSFERASE 1"/>
    <property type="match status" value="1"/>
</dbReference>
<dbReference type="Pfam" id="PF03414">
    <property type="entry name" value="Glyco_transf_6"/>
    <property type="match status" value="1"/>
</dbReference>
<dbReference type="SUPFAM" id="SSF53448">
    <property type="entry name" value="Nucleotide-diphospho-sugar transferases"/>
    <property type="match status" value="1"/>
</dbReference>
<gene>
    <name type="primary">Abo</name>
    <name type="synonym">Abo1</name>
</gene>
<protein>
    <recommendedName>
        <fullName>Histo-blood group ABO system transferase 1</fullName>
    </recommendedName>
    <alternativeName>
        <fullName>Blood group A glycosyltransferase 1</fullName>
    </alternativeName>
    <alternativeName>
        <fullName>Cis-AB transferase 1</fullName>
    </alternativeName>
    <alternativeName>
        <fullName>Fucosylglycoprotein 3-alpha-galactosyltransferase</fullName>
    </alternativeName>
    <alternativeName>
        <fullName>Fucosylglycoprotein alpha-N-acetylgalactosaminyltransferase</fullName>
    </alternativeName>
    <alternativeName>
        <fullName>Glycoprotein-fucosylgalactoside alpha-N-acetylgalactosaminyltransferase</fullName>
        <ecNumber evidence="3">2.4.1.40</ecNumber>
    </alternativeName>
    <alternativeName>
        <fullName>Glycoprotein-fucosylgalactoside alpha-galactosyltransferase</fullName>
        <ecNumber evidence="3">2.4.1.37</ecNumber>
    </alternativeName>
    <alternativeName>
        <fullName>Histo-blood group A transferase</fullName>
        <shortName>A transferase</shortName>
    </alternativeName>
    <alternativeName>
        <fullName>Histo-blood group B transferase</fullName>
        <shortName>B transferase</shortName>
    </alternativeName>
    <alternativeName>
        <fullName>N-acetylgalactosaminyltransferase A blood group-like enzyme</fullName>
    </alternativeName>
    <alternativeName>
        <fullName>NAGAT 1</fullName>
    </alternativeName>
</protein>
<feature type="chain" id="PRO_0000356179" description="Histo-blood group ABO system transferase 1">
    <location>
        <begin position="1"/>
        <end position="348"/>
    </location>
</feature>
<feature type="topological domain" description="Cytoplasmic" evidence="4">
    <location>
        <begin position="1"/>
        <end position="11"/>
    </location>
</feature>
<feature type="transmembrane region" description="Helical; Signal-anchor for type II membrane protein" evidence="4">
    <location>
        <begin position="12"/>
        <end position="32"/>
    </location>
</feature>
<feature type="topological domain" description="Lumenal" evidence="4">
    <location>
        <begin position="33"/>
        <end position="348"/>
    </location>
</feature>
<feature type="active site" description="Nucleophile" evidence="2">
    <location>
        <position position="298"/>
    </location>
</feature>
<feature type="binding site" evidence="3">
    <location>
        <begin position="116"/>
        <end position="118"/>
    </location>
    <ligand>
        <name>UDP-N-acetyl-alpha-D-galactosamine</name>
        <dbReference type="ChEBI" id="CHEBI:67138"/>
    </ligand>
</feature>
<feature type="binding site" evidence="3">
    <location>
        <position position="121"/>
    </location>
    <ligand>
        <name>UDP-N-acetyl-alpha-D-galactosamine</name>
        <dbReference type="ChEBI" id="CHEBI:67138"/>
    </ligand>
</feature>
<feature type="binding site" evidence="3">
    <location>
        <begin position="206"/>
        <end position="208"/>
    </location>
    <ligand>
        <name>UDP-N-acetyl-alpha-D-galactosamine</name>
        <dbReference type="ChEBI" id="CHEBI:67138"/>
    </ligand>
</feature>
<feature type="binding site" evidence="2">
    <location>
        <position position="206"/>
    </location>
    <ligand>
        <name>Mn(2+)</name>
        <dbReference type="ChEBI" id="CHEBI:29035"/>
    </ligand>
</feature>
<feature type="binding site" evidence="2">
    <location>
        <position position="208"/>
    </location>
    <ligand>
        <name>Mn(2+)</name>
        <dbReference type="ChEBI" id="CHEBI:29035"/>
    </ligand>
</feature>
<feature type="binding site" evidence="3">
    <location>
        <position position="228"/>
    </location>
    <ligand>
        <name>an alpha-L-fucosyl-(1-&gt;2)-beta-D-galactosyl derivative</name>
        <dbReference type="ChEBI" id="CHEBI:140327"/>
    </ligand>
</feature>
<feature type="binding site" evidence="3">
    <location>
        <position position="240"/>
    </location>
    <ligand>
        <name>an alpha-L-fucosyl-(1-&gt;2)-beta-D-galactosyl derivative</name>
        <dbReference type="ChEBI" id="CHEBI:140327"/>
    </ligand>
</feature>
<feature type="binding site" evidence="3">
    <location>
        <position position="298"/>
    </location>
    <ligand>
        <name>an alpha-L-fucosyl-(1-&gt;2)-beta-D-galactosyl derivative</name>
        <dbReference type="ChEBI" id="CHEBI:140327"/>
    </ligand>
</feature>
<feature type="binding site" evidence="3">
    <location>
        <position position="321"/>
    </location>
    <ligand>
        <name>an alpha-L-fucosyl-(1-&gt;2)-beta-D-galactosyl derivative</name>
        <dbReference type="ChEBI" id="CHEBI:140327"/>
    </ligand>
</feature>
<feature type="glycosylation site" description="N-linked (GlcNAc...) asparagine" evidence="4">
    <location>
        <position position="108"/>
    </location>
</feature>
<feature type="sequence variant" description="In allele A4.">
    <original>L</original>
    <variation>I</variation>
    <location>
        <position position="22"/>
    </location>
</feature>
<feature type="sequence variant" description="In allele A3.">
    <original>L</original>
    <variation>S</variation>
    <location>
        <position position="24"/>
    </location>
</feature>
<feature type="sequence variant" description="In allele A2 and allele A3.">
    <original>K</original>
    <variation>R</variation>
    <location>
        <position position="35"/>
    </location>
</feature>
<feature type="sequence variant" description="In allele A2 and allele A4.">
    <original>I</original>
    <variation>F</variation>
    <location>
        <position position="36"/>
    </location>
</feature>
<feature type="sequence variant" description="In allele A2.">
    <original>Q</original>
    <variation>H</variation>
    <location>
        <position position="37"/>
    </location>
</feature>
<feature type="sequence variant" description="In allele A2.">
    <original>GG</original>
    <variation>AV</variation>
    <location>
        <begin position="43"/>
        <end position="44"/>
    </location>
</feature>
<feature type="sequence variant" description="In allele A4.">
    <original>T</original>
    <variation>S</variation>
    <location>
        <position position="46"/>
    </location>
</feature>
<feature type="sequence variant" description="In allele A2, allele A3 and allele A4.">
    <original>T</original>
    <variation>M</variation>
    <location>
        <position position="53"/>
    </location>
</feature>
<feature type="sequence variant" description="In allele A2, allele A3 and allele A4.">
    <original>QK</original>
    <variation>HE</variation>
    <location>
        <begin position="56"/>
        <end position="57"/>
    </location>
</feature>
<feature type="sequence variant" description="In allele A3 and allele A4.">
    <original>A</original>
    <variation>T</variation>
    <location>
        <position position="65"/>
    </location>
</feature>
<feature type="sequence variant" description="In allele A3 and allele A4.">
    <original>N</original>
    <variation>K</variation>
    <location>
        <position position="70"/>
    </location>
</feature>
<feature type="sequence variant" description="In allele A4.">
    <original>VLT</original>
    <variation>MLK</variation>
    <location>
        <begin position="71"/>
        <end position="73"/>
    </location>
</feature>
<feature type="sequence variant" description="In allele A2 and allele A3.">
    <original>I</original>
    <variation>T</variation>
    <location>
        <position position="75"/>
    </location>
</feature>
<feature type="sequence variant" description="In allele A4.">
    <original>L</original>
    <variation>T</variation>
    <location>
        <position position="106"/>
    </location>
</feature>
<feature type="sequence variant" description="In allele A2 and allele A4.">
    <original>Q</original>
    <variation>R</variation>
    <location>
        <position position="107"/>
    </location>
</feature>
<feature type="sequence variant" description="In allele A3.">
    <original>V</original>
    <variation>I</variation>
    <location>
        <position position="146"/>
    </location>
</feature>
<feature type="sequence variant" description="In allele A2, allele A3 and allele A4.">
    <original>S</original>
    <variation>A</variation>
    <location>
        <position position="152"/>
    </location>
</feature>
<feature type="sequence variant" description="In allele A2, allele A3 and allele A4.">
    <original>K</original>
    <variation>R</variation>
    <location>
        <position position="164"/>
    </location>
</feature>
<feature type="sequence variant" description="In allele A2.">
    <original>H</original>
    <variation>Y</variation>
    <location>
        <position position="197"/>
    </location>
</feature>
<feature type="sequence variant" description="In allele A4.">
    <original>G</original>
    <variation>A</variation>
    <location>
        <position position="205"/>
    </location>
</feature>
<feature type="sequence variant" description="In allele A4.">
    <original>A</original>
    <variation>S</variation>
    <location>
        <position position="222"/>
    </location>
</feature>
<feature type="sequence variant" description="In allele A4.">
    <original>R</original>
    <variation>S</variation>
    <location>
        <position position="233"/>
    </location>
</feature>
<feature type="sequence variant" description="In allele A4.">
    <original>R</original>
    <variation>Q</variation>
    <location>
        <position position="235"/>
    </location>
</feature>
<feature type="sequence variant" description="In allele A4.">
    <original>P</original>
    <variation>S</variation>
    <location>
        <position position="245"/>
    </location>
</feature>
<feature type="sequence variant" description="In allele A4.">
    <original>R</original>
    <variation>G</variation>
    <location>
        <position position="253"/>
    </location>
</feature>
<feature type="sequence variant" description="In allele A2, allele A3 and allele A4.">
    <original>V</original>
    <variation>L</variation>
    <location>
        <position position="270"/>
    </location>
</feature>
<feature type="sequence variant" description="In allele A2, allele A3 and allele A4.">
    <original>Q</original>
    <variation>K</variation>
    <location>
        <position position="281"/>
    </location>
</feature>
<feature type="sequence variant" description="In allele A4.">
    <original>V</original>
    <variation>L</variation>
    <location>
        <position position="284"/>
    </location>
</feature>
<feature type="sequence variant" description="In allele A2 and allele A3.">
    <original>Q</original>
    <variation>K</variation>
    <location>
        <position position="287"/>
    </location>
</feature>
<feature type="sequence variant" description="In allele A2 and allele A3.">
    <original>H</original>
    <variation>Y</variation>
    <location>
        <position position="300"/>
    </location>
</feature>
<comment type="function">
    <text evidence="6">Possesses strong A transferase activity and weak B transferase activity.</text>
</comment>
<comment type="catalytic activity">
    <reaction evidence="3">
        <text>an alpha-L-fucosyl-(1-&gt;2)-beta-D-galactosyl derivative + UDP-N-acetyl-alpha-D-galactosamine = an N-acetyl-alpha-D-galactosaminyl-(1-&gt;3)-[alpha-L-fucosyl-(1-&gt;2)]-beta-D-galactosyl derivative + UDP + H(+)</text>
        <dbReference type="Rhea" id="RHEA:19021"/>
        <dbReference type="ChEBI" id="CHEBI:15378"/>
        <dbReference type="ChEBI" id="CHEBI:58223"/>
        <dbReference type="ChEBI" id="CHEBI:67138"/>
        <dbReference type="ChEBI" id="CHEBI:140327"/>
        <dbReference type="ChEBI" id="CHEBI:140559"/>
        <dbReference type="EC" id="2.4.1.40"/>
    </reaction>
</comment>
<comment type="catalytic activity">
    <reaction evidence="3">
        <text>an alpha-L-fucosyl-(1-&gt;2)-beta-D-galactosyl derivative + UDP-alpha-D-galactose = an alpha-D-galactosyl-(1-&gt;3)-[alpha-L-fucosyl-(1-&gt;2)]-beta-D-galactosyl derivative + UDP + H(+)</text>
        <dbReference type="Rhea" id="RHEA:14349"/>
        <dbReference type="ChEBI" id="CHEBI:15378"/>
        <dbReference type="ChEBI" id="CHEBI:58223"/>
        <dbReference type="ChEBI" id="CHEBI:66914"/>
        <dbReference type="ChEBI" id="CHEBI:140327"/>
        <dbReference type="ChEBI" id="CHEBI:140328"/>
        <dbReference type="EC" id="2.4.1.37"/>
    </reaction>
</comment>
<comment type="cofactor">
    <cofactor evidence="3">
        <name>Mn(2+)</name>
        <dbReference type="ChEBI" id="CHEBI:29035"/>
    </cofactor>
    <text evidence="3">Binds 1 Mn(2+) ion per subunit.</text>
</comment>
<comment type="pathway">
    <text evidence="3">Protein modification; protein glycosylation.</text>
</comment>
<comment type="subcellular location">
    <subcellularLocation>
        <location>Golgi apparatus</location>
        <location>Golgi stack membrane</location>
        <topology>Single-pass type II membrane protein</topology>
    </subcellularLocation>
    <subcellularLocation>
        <location>Secreted</location>
    </subcellularLocation>
    <text evidence="1">Membrane-bound form in trans cisternae of Golgi. Secreted into the body fluid (By similarity).</text>
</comment>
<comment type="tissue specificity">
    <text evidence="6 7">Tongue, esophagus, large intestine, stomach, caecum, pancreas, uterus, seminal vesicle, submaxillary gland, parotid gland, thyroid gland, parathyroid gland, salivary gland and thymus (at protein level). Esophagus, large intestine, stomach, kidney, urinary bladder, uterus and thymus.</text>
</comment>
<comment type="induction">
    <text evidence="5">During a Nippostrongylus brasiliensis parasite infection. The expression is a transient event, with a maximum at day 6 of the 13-day-long infection.</text>
</comment>
<comment type="domain">
    <text>The conserved DXD motif is involved in cofactor binding. The manganese ion interacts with the beta-phosphate group of UDP and may also have a role in catalysis.</text>
</comment>
<comment type="similarity">
    <text evidence="8">Belongs to the glycosyltransferase 6 family.</text>
</comment>
<accession>Q9ET32</accession>
<accession>Q8CFC5</accession>
<accession>Q8CFC6</accession>
<accession>Q8R005</accession>
<accession>Q8R4Y3</accession>
<accession>Q8R552</accession>
<reference key="1">
    <citation type="journal article" date="2002" name="Eur. J. Biochem.">
        <title>Cloning of a rat gene encoding the histo-blood group A enzyme. Tissue expression of the gene and of the A and B antigens.</title>
        <authorList>
            <person name="Cailleau-Thomas A."/>
            <person name="Le Moullac-Vaidye B."/>
            <person name="Rocher J."/>
            <person name="Bouhours D."/>
            <person name="Szpirer C."/>
            <person name="Le Pendu J."/>
        </authorList>
    </citation>
    <scope>NUCLEOTIDE SEQUENCE [MRNA] (ALLELE A1)</scope>
    <scope>FUNCTION</scope>
    <scope>TISSUE SPECIFICITY</scope>
    <source>
        <strain>BDIX</strain>
        <tissue>Stomach</tissue>
    </source>
</reference>
<reference key="2">
    <citation type="journal article" date="2002" name="J. Biol. Chem.">
        <title>Blood group A glycosyltransferase occurring as alleles with high sequence difference is transiently induced during a Nippostrongylus brasiliensis parasite infection.</title>
        <authorList>
            <person name="Olson F.J."/>
            <person name="Johansson M.E."/>
            <person name="Klinga-Levan K."/>
            <person name="Bouhours D."/>
            <person name="Enerbaeck L."/>
            <person name="Hansson G.C."/>
            <person name="Karlsson N.G."/>
        </authorList>
    </citation>
    <scope>NUCLEOTIDE SEQUENCE [GENOMIC DNA / MRNA] (ALLELES A1 AND A2)</scope>
    <scope>INDUCTION</scope>
    <source>
        <strain>Sprague-Dawley</strain>
    </source>
</reference>
<reference key="3">
    <citation type="journal article" date="2002" name="J. Biol. Chem.">
        <title>Rat encodes the paralogous gene equivalent of the human histo-blood group ABO gene. Association with antigen expression by overexpression of human ABO transferase.</title>
        <authorList>
            <person name="Iwamoto S."/>
            <person name="Kumada M."/>
            <person name="Kamesaki T."/>
            <person name="Okuda H."/>
            <person name="Kajii E."/>
            <person name="Inagaki T."/>
            <person name="Saikawa D."/>
            <person name="Takeuchi K."/>
            <person name="Ohgawara S."/>
            <person name="Takahashi R."/>
            <person name="Ueda S."/>
            <person name="Inoue S."/>
            <person name="Tahara K."/>
            <person name="Hakamata Y."/>
            <person name="Kobayashi E."/>
        </authorList>
    </citation>
    <scope>NUCLEOTIDE SEQUENCE [MRNA] (ALLELES A2; A3 AND A4)</scope>
    <scope>TISSUE SPECIFICITY</scope>
    <source>
        <strain>Wistar</strain>
    </source>
</reference>